<sequence length="576" mass="65996">MQPQEVDLMENSTMRNGARVLPPEAISKRHIGPYIIRETLGEGSFGKVKLATHYKTQQKVALKFISRQLLKKSDMHMRVEREISYLKLLRHPHIIKLYDVITTPTDIVMVIEYAGGELFDYIVEKKRMTEDEGRRFFQQIICAIEYCHRHKIVHRDLKPENLLLDDNLNVKIADFGLSNIMTDGNFLKTSCGSPNYAAPEVINGKLYAGPEVDVWSCGIVLYVMLVGRLPFDDEFIPNLFKKVNSCVYVMPDFLSPGAQSLIRRMIVADPMQRITIQEIRRDPWFNVNLPDYLRPMEEVQGSYADSRIVSKLGEAMGFSEDYIVEALRSDENNEVKEAYNLLHENQVIQEKSHLSKSKRVDSFLSVSPPAFSEYTSELQKKSKQELIDPTLEGPRWTVSDPPTYAKQTIDSNICVLVPTAEKNKLEMRTLADAASAVDTSQSTRKKSRRNKWHFGVRCRGDAPEILLAVYRALQRAGAQFTVPKPVNGKYRSDMYTIKSRWEIPHCKREGKNTYAYIELQLYEVMPGCFMLDVKSNGYKDIYSHPERTADHGMDDLKSSFPFLDLCAMLVCKLFSA</sequence>
<feature type="chain" id="PRO_0000086669" description="SNF1-like protein kinase ssp2">
    <location>
        <begin position="1"/>
        <end position="576"/>
    </location>
</feature>
<feature type="domain" description="Protein kinase" evidence="2 8">
    <location>
        <begin position="34"/>
        <end position="285"/>
    </location>
</feature>
<feature type="domain" description="UBA" evidence="3">
    <location>
        <begin position="304"/>
        <end position="345"/>
    </location>
</feature>
<feature type="region of interest" description="Auto-inhibitory domain (AID)" evidence="8">
    <location>
        <begin position="292"/>
        <end position="348"/>
    </location>
</feature>
<feature type="active site" description="Proton acceptor" evidence="2 4">
    <location>
        <position position="156"/>
    </location>
</feature>
<feature type="binding site" evidence="2">
    <location>
        <begin position="40"/>
        <end position="48"/>
    </location>
    <ligand>
        <name>ATP</name>
        <dbReference type="ChEBI" id="CHEBI:30616"/>
    </ligand>
</feature>
<feature type="binding site" evidence="2">
    <location>
        <position position="63"/>
    </location>
    <ligand>
        <name>ATP</name>
        <dbReference type="ChEBI" id="CHEBI:30616"/>
    </ligand>
</feature>
<feature type="modified residue" description="Phosphothreonine" evidence="10">
    <location>
        <position position="189"/>
    </location>
</feature>
<feature type="modified residue" description="Phosphoserine" evidence="7">
    <location>
        <position position="442"/>
    </location>
</feature>
<feature type="mutagenesis site" description="Impairs phosphorylation by ssp1 and nuclear localization." evidence="10">
    <original>T</original>
    <variation>A</variation>
    <location>
        <position position="189"/>
    </location>
</feature>
<feature type="strand" evidence="16">
    <location>
        <begin position="29"/>
        <end position="31"/>
    </location>
</feature>
<feature type="strand" evidence="16">
    <location>
        <begin position="34"/>
        <end position="43"/>
    </location>
</feature>
<feature type="strand" evidence="16">
    <location>
        <begin position="46"/>
        <end position="53"/>
    </location>
</feature>
<feature type="turn" evidence="16">
    <location>
        <begin position="54"/>
        <end position="56"/>
    </location>
</feature>
<feature type="strand" evidence="16">
    <location>
        <begin position="59"/>
        <end position="66"/>
    </location>
</feature>
<feature type="helix" evidence="16">
    <location>
        <begin position="67"/>
        <end position="72"/>
    </location>
</feature>
<feature type="helix" evidence="16">
    <location>
        <begin position="77"/>
        <end position="86"/>
    </location>
</feature>
<feature type="strand" evidence="16">
    <location>
        <begin position="97"/>
        <end position="102"/>
    </location>
</feature>
<feature type="strand" evidence="16">
    <location>
        <begin position="104"/>
        <end position="111"/>
    </location>
</feature>
<feature type="helix" evidence="16">
    <location>
        <begin position="118"/>
        <end position="125"/>
    </location>
</feature>
<feature type="helix" evidence="16">
    <location>
        <begin position="130"/>
        <end position="149"/>
    </location>
</feature>
<feature type="turn" evidence="16">
    <location>
        <begin position="159"/>
        <end position="161"/>
    </location>
</feature>
<feature type="strand" evidence="16">
    <location>
        <begin position="162"/>
        <end position="164"/>
    </location>
</feature>
<feature type="strand" evidence="16">
    <location>
        <begin position="170"/>
        <end position="172"/>
    </location>
</feature>
<feature type="turn" evidence="16">
    <location>
        <begin position="178"/>
        <end position="183"/>
    </location>
</feature>
<feature type="turn" evidence="16">
    <location>
        <begin position="194"/>
        <end position="196"/>
    </location>
</feature>
<feature type="helix" evidence="16">
    <location>
        <begin position="199"/>
        <end position="201"/>
    </location>
</feature>
<feature type="helix" evidence="16">
    <location>
        <begin position="206"/>
        <end position="208"/>
    </location>
</feature>
<feature type="helix" evidence="16">
    <location>
        <begin position="210"/>
        <end position="226"/>
    </location>
</feature>
<feature type="strand" evidence="16">
    <location>
        <begin position="230"/>
        <end position="232"/>
    </location>
</feature>
<feature type="strand" evidence="16">
    <location>
        <begin position="234"/>
        <end position="236"/>
    </location>
</feature>
<feature type="helix" evidence="16">
    <location>
        <begin position="256"/>
        <end position="263"/>
    </location>
</feature>
<feature type="helix" evidence="16">
    <location>
        <begin position="270"/>
        <end position="272"/>
    </location>
</feature>
<feature type="helix" evidence="16">
    <location>
        <begin position="276"/>
        <end position="279"/>
    </location>
</feature>
<feature type="helix" evidence="16">
    <location>
        <begin position="283"/>
        <end position="286"/>
    </location>
</feature>
<feature type="helix" evidence="16">
    <location>
        <begin position="291"/>
        <end position="293"/>
    </location>
</feature>
<feature type="helix" evidence="16">
    <location>
        <begin position="306"/>
        <end position="314"/>
    </location>
</feature>
<feature type="helix" evidence="16">
    <location>
        <begin position="320"/>
        <end position="326"/>
    </location>
</feature>
<feature type="strand" evidence="16">
    <location>
        <begin position="329"/>
        <end position="331"/>
    </location>
</feature>
<feature type="helix" evidence="16">
    <location>
        <begin position="338"/>
        <end position="351"/>
    </location>
</feature>
<feature type="strand" evidence="15">
    <location>
        <begin position="453"/>
        <end position="460"/>
    </location>
</feature>
<feature type="helix" evidence="15">
    <location>
        <begin position="462"/>
        <end position="476"/>
    </location>
</feature>
<feature type="strand" evidence="14">
    <location>
        <begin position="486"/>
        <end position="489"/>
    </location>
</feature>
<feature type="helix" evidence="15">
    <location>
        <begin position="492"/>
        <end position="495"/>
    </location>
</feature>
<feature type="strand" evidence="15">
    <location>
        <begin position="496"/>
        <end position="502"/>
    </location>
</feature>
<feature type="helix" evidence="15">
    <location>
        <begin position="504"/>
        <end position="508"/>
    </location>
</feature>
<feature type="strand" evidence="15">
    <location>
        <begin position="513"/>
        <end position="525"/>
    </location>
</feature>
<feature type="strand" evidence="15">
    <location>
        <begin position="528"/>
        <end position="541"/>
    </location>
</feature>
<feature type="turn" evidence="13">
    <location>
        <begin position="545"/>
        <end position="547"/>
    </location>
</feature>
<feature type="helix" evidence="15">
    <location>
        <begin position="562"/>
        <end position="575"/>
    </location>
</feature>
<keyword id="KW-0002">3D-structure</keyword>
<keyword id="KW-0067">ATP-binding</keyword>
<keyword id="KW-0119">Carbohydrate metabolism</keyword>
<keyword id="KW-0963">Cytoplasm</keyword>
<keyword id="KW-0418">Kinase</keyword>
<keyword id="KW-0547">Nucleotide-binding</keyword>
<keyword id="KW-0539">Nucleus</keyword>
<keyword id="KW-0597">Phosphoprotein</keyword>
<keyword id="KW-1185">Reference proteome</keyword>
<keyword id="KW-0723">Serine/threonine-protein kinase</keyword>
<keyword id="KW-0808">Transferase</keyword>
<comment type="function">
    <text evidence="1 9 10">Serine/threonine protein kinase essential for release from glucose repression via the phosphorylation of scr1 upon glucose deprivation (PubMed:22140232). Catalytic subunit of the AMP-activated protein kinase complex also known as the SNF1 kinase complex (Snf1c), a central regulator of cellular energy homeostasis, which, in response to a fall in intracellular ATP levels, activates energy-producing pathways and inhibits energy-consuming processes (PubMed:22375066). The complex phosphorylates histone H3 to form H3S10ph, which promotes H3K14ac formation, leading to transcriptional activation through TBP recruitment to the promoters (By similarity). Regulates proper cell cycle exit and sexual differentiation (PubMed:22375066). Also regulates ste11 levels under nitrogen deprivation (PubMed:22375066).</text>
</comment>
<comment type="catalytic activity">
    <reaction evidence="1">
        <text>L-seryl-[protein] + ATP = O-phospho-L-seryl-[protein] + ADP + H(+)</text>
        <dbReference type="Rhea" id="RHEA:17989"/>
        <dbReference type="Rhea" id="RHEA-COMP:9863"/>
        <dbReference type="Rhea" id="RHEA-COMP:11604"/>
        <dbReference type="ChEBI" id="CHEBI:15378"/>
        <dbReference type="ChEBI" id="CHEBI:29999"/>
        <dbReference type="ChEBI" id="CHEBI:30616"/>
        <dbReference type="ChEBI" id="CHEBI:83421"/>
        <dbReference type="ChEBI" id="CHEBI:456216"/>
        <dbReference type="EC" id="2.7.11.1"/>
    </reaction>
</comment>
<comment type="catalytic activity">
    <reaction evidence="1">
        <text>L-threonyl-[protein] + ATP = O-phospho-L-threonyl-[protein] + ADP + H(+)</text>
        <dbReference type="Rhea" id="RHEA:46608"/>
        <dbReference type="Rhea" id="RHEA-COMP:11060"/>
        <dbReference type="Rhea" id="RHEA-COMP:11605"/>
        <dbReference type="ChEBI" id="CHEBI:15378"/>
        <dbReference type="ChEBI" id="CHEBI:30013"/>
        <dbReference type="ChEBI" id="CHEBI:30616"/>
        <dbReference type="ChEBI" id="CHEBI:61977"/>
        <dbReference type="ChEBI" id="CHEBI:456216"/>
        <dbReference type="EC" id="2.7.11.1"/>
    </reaction>
</comment>
<comment type="subunit">
    <text evidence="5 6">Component of the AMP-activated protein kinase complex also known as the SNF1 kinase complex (Snf1c), a heterotrimeric complex composed of a catalytic subunit alpha and 2 regulatory subunits beta (amk2) and gamma (cbs2) (PubMed:17289942, PubMed:17937917).</text>
</comment>
<comment type="subcellular location">
    <subcellularLocation>
        <location evidence="10">Cytoplasm</location>
    </subcellularLocation>
    <subcellularLocation>
        <location evidence="9 10">Nucleus</location>
    </subcellularLocation>
    <text evidence="10">Nuclear translocation occurs under nitrogen and glucose starvation conditions and depends on Thr-189 phosphorylation by ssp1 (PubMed:22375066).</text>
</comment>
<comment type="domain">
    <text evidence="8">The regulatory domain (RS) also called auto-inhibitory domain (AID) inhibits kinase activity of the protein kinase domain (KD) (PubMed:19474788).</text>
</comment>
<comment type="domain">
    <text evidence="1">The ubiquitin-associated domain (UBA) localized within the AID dampens kinase activation, probably by restraining alpha-gamma associations (By similarity).</text>
</comment>
<comment type="PTM">
    <text evidence="10">Phosphorylation at Thr-189 by ssp1 is required for nuclear entry in nutritionally stressed cells (PubMed:22375066).</text>
</comment>
<comment type="disruption phenotype">
    <text evidence="9 10">Prevents assimilation of glycerol and fails to induce expression of glycerol dehydrogenase gld1 on glycerol medium (PubMed:22140232). Leads to diminished mating efficiency (PubMed:22375066).</text>
</comment>
<comment type="similarity">
    <text evidence="12">Belongs to the protein kinase superfamily. CAMK Ser/Thr protein kinase family. SNF1 subfamily.</text>
</comment>
<organism>
    <name type="scientific">Schizosaccharomyces pombe (strain 972 / ATCC 24843)</name>
    <name type="common">Fission yeast</name>
    <dbReference type="NCBI Taxonomy" id="284812"/>
    <lineage>
        <taxon>Eukaryota</taxon>
        <taxon>Fungi</taxon>
        <taxon>Dikarya</taxon>
        <taxon>Ascomycota</taxon>
        <taxon>Taphrinomycotina</taxon>
        <taxon>Schizosaccharomycetes</taxon>
        <taxon>Schizosaccharomycetales</taxon>
        <taxon>Schizosaccharomycetaceae</taxon>
        <taxon>Schizosaccharomyces</taxon>
    </lineage>
</organism>
<name>SNF1_SCHPO</name>
<proteinExistence type="evidence at protein level"/>
<dbReference type="EC" id="2.7.11.1" evidence="1"/>
<dbReference type="EMBL" id="CU329672">
    <property type="protein sequence ID" value="CAA20833.1"/>
    <property type="molecule type" value="Genomic_DNA"/>
</dbReference>
<dbReference type="PIR" id="T41587">
    <property type="entry name" value="T41587"/>
</dbReference>
<dbReference type="RefSeq" id="NP_588376.1">
    <property type="nucleotide sequence ID" value="NM_001023367.2"/>
</dbReference>
<dbReference type="PDB" id="2OOX">
    <property type="method" value="X-ray"/>
    <property type="resolution" value="2.60 A"/>
    <property type="chains" value="A/C=440-576"/>
</dbReference>
<dbReference type="PDB" id="2OOY">
    <property type="method" value="X-ray"/>
    <property type="resolution" value="2.88 A"/>
    <property type="chains" value="A/C=440-576"/>
</dbReference>
<dbReference type="PDB" id="2QR1">
    <property type="method" value="X-ray"/>
    <property type="resolution" value="2.70 A"/>
    <property type="chains" value="A/C=440-576"/>
</dbReference>
<dbReference type="PDB" id="2QRC">
    <property type="method" value="X-ray"/>
    <property type="resolution" value="2.70 A"/>
    <property type="chains" value="A/C=440-576"/>
</dbReference>
<dbReference type="PDB" id="2QRD">
    <property type="method" value="X-ray"/>
    <property type="resolution" value="2.41 A"/>
    <property type="chains" value="A/C=440-576"/>
</dbReference>
<dbReference type="PDB" id="2QRE">
    <property type="method" value="X-ray"/>
    <property type="resolution" value="3.01 A"/>
    <property type="chains" value="A/C=440-576"/>
</dbReference>
<dbReference type="PDB" id="3H4J">
    <property type="method" value="X-ray"/>
    <property type="resolution" value="2.80 A"/>
    <property type="chains" value="A/B=25-351"/>
</dbReference>
<dbReference type="PDBsum" id="2OOX"/>
<dbReference type="PDBsum" id="2OOY"/>
<dbReference type="PDBsum" id="2QR1"/>
<dbReference type="PDBsum" id="2QRC"/>
<dbReference type="PDBsum" id="2QRD"/>
<dbReference type="PDBsum" id="2QRE"/>
<dbReference type="PDBsum" id="3H4J"/>
<dbReference type="SMR" id="O74536"/>
<dbReference type="BioGRID" id="275681">
    <property type="interactions" value="228"/>
</dbReference>
<dbReference type="ComplexPortal" id="CPX-25752">
    <property type="entry name" value="AMPK complex"/>
</dbReference>
<dbReference type="DIP" id="DIP-29520N"/>
<dbReference type="FunCoup" id="O74536">
    <property type="interactions" value="745"/>
</dbReference>
<dbReference type="IntAct" id="O74536">
    <property type="interactions" value="2"/>
</dbReference>
<dbReference type="STRING" id="284812.O74536"/>
<dbReference type="iPTMnet" id="O74536"/>
<dbReference type="PaxDb" id="4896-SPCC74.03c.1"/>
<dbReference type="EnsemblFungi" id="SPCC74.03c.1">
    <property type="protein sequence ID" value="SPCC74.03c.1:pep"/>
    <property type="gene ID" value="SPCC74.03c"/>
</dbReference>
<dbReference type="GeneID" id="2539109"/>
<dbReference type="KEGG" id="spo:2539109"/>
<dbReference type="PomBase" id="SPCC74.03c">
    <property type="gene designation" value="ssp2"/>
</dbReference>
<dbReference type="VEuPathDB" id="FungiDB:SPCC74.03c"/>
<dbReference type="eggNOG" id="KOG0583">
    <property type="taxonomic scope" value="Eukaryota"/>
</dbReference>
<dbReference type="HOGENOM" id="CLU_000288_59_3_1"/>
<dbReference type="InParanoid" id="O74536"/>
<dbReference type="OMA" id="MQRITIQ"/>
<dbReference type="PhylomeDB" id="O74536"/>
<dbReference type="BRENDA" id="2.7.11.1">
    <property type="organism ID" value="5613"/>
</dbReference>
<dbReference type="Reactome" id="R-SPO-1632852">
    <property type="pathway name" value="Macroautophagy"/>
</dbReference>
<dbReference type="Reactome" id="R-SPO-163680">
    <property type="pathway name" value="AMPK inhibits chREBP transcriptional activation activity"/>
</dbReference>
<dbReference type="Reactome" id="R-SPO-200425">
    <property type="pathway name" value="Carnitine shuttle"/>
</dbReference>
<dbReference type="Reactome" id="R-SPO-380972">
    <property type="pathway name" value="Energy dependent regulation of mTOR by LKB1-AMPK"/>
</dbReference>
<dbReference type="Reactome" id="R-SPO-5628897">
    <property type="pathway name" value="TP53 Regulates Metabolic Genes"/>
</dbReference>
<dbReference type="EvolutionaryTrace" id="O74536"/>
<dbReference type="PRO" id="PR:O74536"/>
<dbReference type="Proteomes" id="UP000002485">
    <property type="component" value="Chromosome III"/>
</dbReference>
<dbReference type="ExpressionAtlas" id="O74536">
    <property type="expression patterns" value="differential"/>
</dbReference>
<dbReference type="GO" id="GO:0005737">
    <property type="term" value="C:cytoplasm"/>
    <property type="evidence" value="ECO:0000314"/>
    <property type="project" value="PomBase"/>
</dbReference>
<dbReference type="GO" id="GO:0005829">
    <property type="term" value="C:cytosol"/>
    <property type="evidence" value="ECO:0007005"/>
    <property type="project" value="PomBase"/>
</dbReference>
<dbReference type="GO" id="GO:0044732">
    <property type="term" value="C:mitotic spindle pole body"/>
    <property type="evidence" value="ECO:0007005"/>
    <property type="project" value="PomBase"/>
</dbReference>
<dbReference type="GO" id="GO:0031588">
    <property type="term" value="C:nucleotide-activated protein kinase complex"/>
    <property type="evidence" value="ECO:0000314"/>
    <property type="project" value="PomBase"/>
</dbReference>
<dbReference type="GO" id="GO:0005634">
    <property type="term" value="C:nucleus"/>
    <property type="evidence" value="ECO:0000314"/>
    <property type="project" value="PomBase"/>
</dbReference>
<dbReference type="GO" id="GO:0005524">
    <property type="term" value="F:ATP binding"/>
    <property type="evidence" value="ECO:0000255"/>
    <property type="project" value="PomBase"/>
</dbReference>
<dbReference type="GO" id="GO:0106310">
    <property type="term" value="F:protein serine kinase activity"/>
    <property type="evidence" value="ECO:0007669"/>
    <property type="project" value="RHEA"/>
</dbReference>
<dbReference type="GO" id="GO:0004674">
    <property type="term" value="F:protein serine/threonine kinase activity"/>
    <property type="evidence" value="ECO:0000314"/>
    <property type="project" value="PomBase"/>
</dbReference>
<dbReference type="GO" id="GO:0061762">
    <property type="term" value="P:CAMKK-AMPK signaling cascade"/>
    <property type="evidence" value="ECO:0000315"/>
    <property type="project" value="PomBase"/>
</dbReference>
<dbReference type="GO" id="GO:0010514">
    <property type="term" value="P:induction of conjugation with cellular fusion"/>
    <property type="evidence" value="ECO:0000269"/>
    <property type="project" value="PomBase"/>
</dbReference>
<dbReference type="GO" id="GO:2000766">
    <property type="term" value="P:negative regulation of cytoplasmic translation"/>
    <property type="evidence" value="ECO:0000266"/>
    <property type="project" value="PomBase"/>
</dbReference>
<dbReference type="GO" id="GO:1904262">
    <property type="term" value="P:negative regulation of TORC1 signaling"/>
    <property type="evidence" value="ECO:0000315"/>
    <property type="project" value="PomBase"/>
</dbReference>
<dbReference type="GO" id="GO:0140648">
    <property type="term" value="P:positive regulation of cell cycle switching, mitotic to meiotic cell cycle"/>
    <property type="evidence" value="ECO:0000269"/>
    <property type="project" value="PomBase"/>
</dbReference>
<dbReference type="GO" id="GO:0045944">
    <property type="term" value="P:positive regulation of transcription by RNA polymerase II"/>
    <property type="evidence" value="ECO:0000315"/>
    <property type="project" value="PomBase"/>
</dbReference>
<dbReference type="GO" id="GO:0032933">
    <property type="term" value="P:SREBP signaling pathway"/>
    <property type="evidence" value="ECO:0000315"/>
    <property type="project" value="PomBase"/>
</dbReference>
<dbReference type="CDD" id="cd12122">
    <property type="entry name" value="AMPKA_C"/>
    <property type="match status" value="1"/>
</dbReference>
<dbReference type="CDD" id="cd14079">
    <property type="entry name" value="STKc_AMPK_alpha"/>
    <property type="match status" value="1"/>
</dbReference>
<dbReference type="CDD" id="cd14334">
    <property type="entry name" value="UBA_SNF1_fungi"/>
    <property type="match status" value="1"/>
</dbReference>
<dbReference type="FunFam" id="1.10.510.10:FF:000544">
    <property type="entry name" value="Non-specific serine/threonine protein kinase"/>
    <property type="match status" value="1"/>
</dbReference>
<dbReference type="FunFam" id="1.10.8.10:FF:000069">
    <property type="entry name" value="Non-specific serine/threonine protein kinase"/>
    <property type="match status" value="1"/>
</dbReference>
<dbReference type="FunFam" id="3.30.200.20:FF:000236">
    <property type="entry name" value="Non-specific serine/threonine protein kinase"/>
    <property type="match status" value="1"/>
</dbReference>
<dbReference type="FunFam" id="3.30.310.80:FF:000025">
    <property type="entry name" value="SNF1-like protein kinase ssp2"/>
    <property type="match status" value="1"/>
</dbReference>
<dbReference type="Gene3D" id="1.10.8.10">
    <property type="entry name" value="DNA helicase RuvA subunit, C-terminal domain"/>
    <property type="match status" value="1"/>
</dbReference>
<dbReference type="Gene3D" id="3.30.310.80">
    <property type="entry name" value="Kinase associated domain 1, KA1"/>
    <property type="match status" value="1"/>
</dbReference>
<dbReference type="Gene3D" id="3.30.200.20">
    <property type="entry name" value="Phosphorylase Kinase, domain 1"/>
    <property type="match status" value="1"/>
</dbReference>
<dbReference type="Gene3D" id="1.10.510.10">
    <property type="entry name" value="Transferase(Phosphotransferase) domain 1"/>
    <property type="match status" value="1"/>
</dbReference>
<dbReference type="InterPro" id="IPR032270">
    <property type="entry name" value="AMPK_C"/>
</dbReference>
<dbReference type="InterPro" id="IPR028375">
    <property type="entry name" value="KA1/Ssp2_C"/>
</dbReference>
<dbReference type="InterPro" id="IPR011009">
    <property type="entry name" value="Kinase-like_dom_sf"/>
</dbReference>
<dbReference type="InterPro" id="IPR000719">
    <property type="entry name" value="Prot_kinase_dom"/>
</dbReference>
<dbReference type="InterPro" id="IPR017441">
    <property type="entry name" value="Protein_kinase_ATP_BS"/>
</dbReference>
<dbReference type="InterPro" id="IPR008271">
    <property type="entry name" value="Ser/Thr_kinase_AS"/>
</dbReference>
<dbReference type="InterPro" id="IPR013896">
    <property type="entry name" value="SNF1_UBA"/>
</dbReference>
<dbReference type="InterPro" id="IPR015940">
    <property type="entry name" value="UBA"/>
</dbReference>
<dbReference type="PANTHER" id="PTHR24346">
    <property type="entry name" value="MAP/MICROTUBULE AFFINITY-REGULATING KINASE"/>
    <property type="match status" value="1"/>
</dbReference>
<dbReference type="PANTHER" id="PTHR24346:SF110">
    <property type="entry name" value="NON-SPECIFIC SERINE_THREONINE PROTEIN KINASE"/>
    <property type="match status" value="1"/>
</dbReference>
<dbReference type="Pfam" id="PF16579">
    <property type="entry name" value="AdenylateSensor"/>
    <property type="match status" value="1"/>
</dbReference>
<dbReference type="Pfam" id="PF00069">
    <property type="entry name" value="Pkinase"/>
    <property type="match status" value="1"/>
</dbReference>
<dbReference type="Pfam" id="PF08587">
    <property type="entry name" value="UBA_2"/>
    <property type="match status" value="1"/>
</dbReference>
<dbReference type="SMART" id="SM00220">
    <property type="entry name" value="S_TKc"/>
    <property type="match status" value="1"/>
</dbReference>
<dbReference type="SUPFAM" id="SSF103243">
    <property type="entry name" value="KA1-like"/>
    <property type="match status" value="1"/>
</dbReference>
<dbReference type="SUPFAM" id="SSF56112">
    <property type="entry name" value="Protein kinase-like (PK-like)"/>
    <property type="match status" value="1"/>
</dbReference>
<dbReference type="PROSITE" id="PS00107">
    <property type="entry name" value="PROTEIN_KINASE_ATP"/>
    <property type="match status" value="1"/>
</dbReference>
<dbReference type="PROSITE" id="PS50011">
    <property type="entry name" value="PROTEIN_KINASE_DOM"/>
    <property type="match status" value="1"/>
</dbReference>
<dbReference type="PROSITE" id="PS00108">
    <property type="entry name" value="PROTEIN_KINASE_ST"/>
    <property type="match status" value="1"/>
</dbReference>
<dbReference type="PROSITE" id="PS50030">
    <property type="entry name" value="UBA"/>
    <property type="match status" value="1"/>
</dbReference>
<gene>
    <name evidence="11" type="primary">ssp2</name>
    <name type="ORF">SPCC74.03c</name>
</gene>
<protein>
    <recommendedName>
        <fullName evidence="11">SNF1-like protein kinase ssp2</fullName>
        <ecNumber evidence="1">2.7.11.1</ecNumber>
    </recommendedName>
</protein>
<accession>O74536</accession>
<evidence type="ECO:0000250" key="1">
    <source>
        <dbReference type="UniProtKB" id="P06782"/>
    </source>
</evidence>
<evidence type="ECO:0000255" key="2">
    <source>
        <dbReference type="PROSITE-ProRule" id="PRU00159"/>
    </source>
</evidence>
<evidence type="ECO:0000255" key="3">
    <source>
        <dbReference type="PROSITE-ProRule" id="PRU00212"/>
    </source>
</evidence>
<evidence type="ECO:0000255" key="4">
    <source>
        <dbReference type="PROSITE-ProRule" id="PRU10027"/>
    </source>
</evidence>
<evidence type="ECO:0000269" key="5">
    <source>
    </source>
</evidence>
<evidence type="ECO:0000269" key="6">
    <source>
    </source>
</evidence>
<evidence type="ECO:0000269" key="7">
    <source>
    </source>
</evidence>
<evidence type="ECO:0000269" key="8">
    <source>
    </source>
</evidence>
<evidence type="ECO:0000269" key="9">
    <source>
    </source>
</evidence>
<evidence type="ECO:0000269" key="10">
    <source>
    </source>
</evidence>
<evidence type="ECO:0000303" key="11">
    <source>
    </source>
</evidence>
<evidence type="ECO:0000305" key="12"/>
<evidence type="ECO:0007829" key="13">
    <source>
        <dbReference type="PDB" id="2OOX"/>
    </source>
</evidence>
<evidence type="ECO:0007829" key="14">
    <source>
        <dbReference type="PDB" id="2QR1"/>
    </source>
</evidence>
<evidence type="ECO:0007829" key="15">
    <source>
        <dbReference type="PDB" id="2QRD"/>
    </source>
</evidence>
<evidence type="ECO:0007829" key="16">
    <source>
        <dbReference type="PDB" id="3H4J"/>
    </source>
</evidence>
<reference key="1">
    <citation type="journal article" date="2002" name="Nature">
        <title>The genome sequence of Schizosaccharomyces pombe.</title>
        <authorList>
            <person name="Wood V."/>
            <person name="Gwilliam R."/>
            <person name="Rajandream M.A."/>
            <person name="Lyne M.H."/>
            <person name="Lyne R."/>
            <person name="Stewart A."/>
            <person name="Sgouros J.G."/>
            <person name="Peat N."/>
            <person name="Hayles J."/>
            <person name="Baker S.G."/>
            <person name="Basham D."/>
            <person name="Bowman S."/>
            <person name="Brooks K."/>
            <person name="Brown D."/>
            <person name="Brown S."/>
            <person name="Chillingworth T."/>
            <person name="Churcher C.M."/>
            <person name="Collins M."/>
            <person name="Connor R."/>
            <person name="Cronin A."/>
            <person name="Davis P."/>
            <person name="Feltwell T."/>
            <person name="Fraser A."/>
            <person name="Gentles S."/>
            <person name="Goble A."/>
            <person name="Hamlin N."/>
            <person name="Harris D.E."/>
            <person name="Hidalgo J."/>
            <person name="Hodgson G."/>
            <person name="Holroyd S."/>
            <person name="Hornsby T."/>
            <person name="Howarth S."/>
            <person name="Huckle E.J."/>
            <person name="Hunt S."/>
            <person name="Jagels K."/>
            <person name="James K.D."/>
            <person name="Jones L."/>
            <person name="Jones M."/>
            <person name="Leather S."/>
            <person name="McDonald S."/>
            <person name="McLean J."/>
            <person name="Mooney P."/>
            <person name="Moule S."/>
            <person name="Mungall K.L."/>
            <person name="Murphy L.D."/>
            <person name="Niblett D."/>
            <person name="Odell C."/>
            <person name="Oliver K."/>
            <person name="O'Neil S."/>
            <person name="Pearson D."/>
            <person name="Quail M.A."/>
            <person name="Rabbinowitsch E."/>
            <person name="Rutherford K.M."/>
            <person name="Rutter S."/>
            <person name="Saunders D."/>
            <person name="Seeger K."/>
            <person name="Sharp S."/>
            <person name="Skelton J."/>
            <person name="Simmonds M.N."/>
            <person name="Squares R."/>
            <person name="Squares S."/>
            <person name="Stevens K."/>
            <person name="Taylor K."/>
            <person name="Taylor R.G."/>
            <person name="Tivey A."/>
            <person name="Walsh S.V."/>
            <person name="Warren T."/>
            <person name="Whitehead S."/>
            <person name="Woodward J.R."/>
            <person name="Volckaert G."/>
            <person name="Aert R."/>
            <person name="Robben J."/>
            <person name="Grymonprez B."/>
            <person name="Weltjens I."/>
            <person name="Vanstreels E."/>
            <person name="Rieger M."/>
            <person name="Schaefer M."/>
            <person name="Mueller-Auer S."/>
            <person name="Gabel C."/>
            <person name="Fuchs M."/>
            <person name="Duesterhoeft A."/>
            <person name="Fritzc C."/>
            <person name="Holzer E."/>
            <person name="Moestl D."/>
            <person name="Hilbert H."/>
            <person name="Borzym K."/>
            <person name="Langer I."/>
            <person name="Beck A."/>
            <person name="Lehrach H."/>
            <person name="Reinhardt R."/>
            <person name="Pohl T.M."/>
            <person name="Eger P."/>
            <person name="Zimmermann W."/>
            <person name="Wedler H."/>
            <person name="Wambutt R."/>
            <person name="Purnelle B."/>
            <person name="Goffeau A."/>
            <person name="Cadieu E."/>
            <person name="Dreano S."/>
            <person name="Gloux S."/>
            <person name="Lelaure V."/>
            <person name="Mottier S."/>
            <person name="Galibert F."/>
            <person name="Aves S.J."/>
            <person name="Xiang Z."/>
            <person name="Hunt C."/>
            <person name="Moore K."/>
            <person name="Hurst S.M."/>
            <person name="Lucas M."/>
            <person name="Rochet M."/>
            <person name="Gaillardin C."/>
            <person name="Tallada V.A."/>
            <person name="Garzon A."/>
            <person name="Thode G."/>
            <person name="Daga R.R."/>
            <person name="Cruzado L."/>
            <person name="Jimenez J."/>
            <person name="Sanchez M."/>
            <person name="del Rey F."/>
            <person name="Benito J."/>
            <person name="Dominguez A."/>
            <person name="Revuelta J.L."/>
            <person name="Moreno S."/>
            <person name="Armstrong J."/>
            <person name="Forsburg S.L."/>
            <person name="Cerutti L."/>
            <person name="Lowe T."/>
            <person name="McCombie W.R."/>
            <person name="Paulsen I."/>
            <person name="Potashkin J."/>
            <person name="Shpakovski G.V."/>
            <person name="Ussery D."/>
            <person name="Barrell B.G."/>
            <person name="Nurse P."/>
        </authorList>
    </citation>
    <scope>NUCLEOTIDE SEQUENCE [LARGE SCALE GENOMIC DNA]</scope>
    <source>
        <strain>972 / ATCC 24843</strain>
    </source>
</reference>
<reference key="2">
    <citation type="journal article" date="2008" name="J. Proteome Res.">
        <title>Phosphoproteome analysis of fission yeast.</title>
        <authorList>
            <person name="Wilson-Grady J.T."/>
            <person name="Villen J."/>
            <person name="Gygi S.P."/>
        </authorList>
    </citation>
    <scope>PHOSPHORYLATION [LARGE SCALE ANALYSIS] AT SER-442</scope>
    <scope>IDENTIFICATION BY MASS SPECTROMETRY</scope>
</reference>
<reference key="3">
    <citation type="journal article" date="2012" name="Eukaryot. Cell">
        <title>Snf1-like protein kinase Ssp2 regulates glucose derepression in Schizosaccharomyces pombe.</title>
        <authorList>
            <person name="Matsuzawa T."/>
            <person name="Fujita Y."/>
            <person name="Tohda H."/>
            <person name="Takegawa K."/>
        </authorList>
    </citation>
    <scope>FUNCTION</scope>
    <scope>DISRUPTION PHENOTYPE</scope>
    <scope>SUBCELLULAR LOCATION</scope>
</reference>
<reference key="4">
    <citation type="journal article" date="2012" name="J. Cell Sci.">
        <title>AMPK phosphorylation by Ssp1 is required for proper sexual differentiation in fission yeast.</title>
        <authorList>
            <person name="Valbuena N."/>
            <person name="Moreno S."/>
        </authorList>
    </citation>
    <scope>FUNCTION</scope>
    <scope>DISRUPTION PHENOTYPE</scope>
    <scope>PHOSPHORYLATION AT THR-189 BY SSP1</scope>
    <scope>MUTAGENESIS OF THR-189</scope>
    <scope>SUBCELLULAR LOCATION</scope>
</reference>
<reference key="5">
    <citation type="journal article" date="2007" name="Science">
        <title>Crystal structures of the adenylate sensor from fission yeast AMP-activated protein kinase.</title>
        <authorList>
            <person name="Townley R."/>
            <person name="Shapiro L."/>
        </authorList>
    </citation>
    <scope>X-RAY CRYSTALLOGRAPHY (2.60 ANGSTROMS) OF 440-576 IN COMPLEX WITH AMK2 AND CBS2</scope>
    <scope>SUBUNIT</scope>
</reference>
<reference key="6">
    <citation type="journal article" date="2007" name="Structure">
        <title>Structural insight into AMPK regulation: ADP comes into play.</title>
        <authorList>
            <person name="Jin X."/>
            <person name="Townley R."/>
            <person name="Shapiro L."/>
        </authorList>
    </citation>
    <scope>X-RAY CRYSTALLOGRAPHY (2.41 ANGSTROMS) OF 440-576 IN COMPLEX WITH AMK2 AND CBS2</scope>
    <scope>SUBUNIT</scope>
</reference>
<reference key="7">
    <citation type="journal article" date="2009" name="Nature">
        <title>Structural insight into the autoinhibition mechanism of AMP-activated protein kinase.</title>
        <authorList>
            <person name="Chen L."/>
            <person name="Jiao Z.H."/>
            <person name="Zheng L.S."/>
            <person name="Zhang Y.Y."/>
            <person name="Xie S.T."/>
            <person name="Wang Z.X."/>
            <person name="Wu J.W."/>
        </authorList>
    </citation>
    <scope>X-RAY CRYSTALLOGRAPHY (2.80 ANGSTROMS) OF 25-351</scope>
    <scope>DOMAIN</scope>
</reference>